<organism>
    <name type="scientific">Rattus norvegicus</name>
    <name type="common">Rat</name>
    <dbReference type="NCBI Taxonomy" id="10116"/>
    <lineage>
        <taxon>Eukaryota</taxon>
        <taxon>Metazoa</taxon>
        <taxon>Chordata</taxon>
        <taxon>Craniata</taxon>
        <taxon>Vertebrata</taxon>
        <taxon>Euteleostomi</taxon>
        <taxon>Mammalia</taxon>
        <taxon>Eutheria</taxon>
        <taxon>Euarchontoglires</taxon>
        <taxon>Glires</taxon>
        <taxon>Rodentia</taxon>
        <taxon>Myomorpha</taxon>
        <taxon>Muroidea</taxon>
        <taxon>Muridae</taxon>
        <taxon>Murinae</taxon>
        <taxon>Rattus</taxon>
    </lineage>
</organism>
<reference key="1">
    <citation type="journal article" date="2004" name="Genome Res.">
        <title>The status, quality, and expansion of the NIH full-length cDNA project: the Mammalian Gene Collection (MGC).</title>
        <authorList>
            <consortium name="The MGC Project Team"/>
        </authorList>
    </citation>
    <scope>NUCLEOTIDE SEQUENCE [LARGE SCALE MRNA]</scope>
    <source>
        <tissue>Heart</tissue>
    </source>
</reference>
<proteinExistence type="evidence at transcript level"/>
<keyword id="KW-0256">Endoplasmic reticulum</keyword>
<keyword id="KW-0337">GPI-anchor biosynthesis</keyword>
<keyword id="KW-0472">Membrane</keyword>
<keyword id="KW-1185">Reference proteome</keyword>
<keyword id="KW-0812">Transmembrane</keyword>
<keyword id="KW-1133">Transmembrane helix</keyword>
<evidence type="ECO:0000250" key="1">
    <source>
        <dbReference type="UniProtKB" id="Q92535"/>
    </source>
</evidence>
<evidence type="ECO:0000255" key="2"/>
<evidence type="ECO:0000305" key="3"/>
<evidence type="ECO:0000312" key="4">
    <source>
        <dbReference type="RGD" id="1311337"/>
    </source>
</evidence>
<protein>
    <recommendedName>
        <fullName evidence="3">Phosphatidylinositol N-acetylglucosaminyltransferase subunit C</fullName>
    </recommendedName>
    <alternativeName>
        <fullName>Phosphatidylinositol-glycan biosynthesis class C protein</fullName>
        <shortName>PIG-C</shortName>
    </alternativeName>
</protein>
<dbReference type="EMBL" id="BC087080">
    <property type="protein sequence ID" value="AAH87080.1"/>
    <property type="molecule type" value="mRNA"/>
</dbReference>
<dbReference type="RefSeq" id="NP_001012207.1">
    <property type="nucleotide sequence ID" value="NM_001012207.1"/>
</dbReference>
<dbReference type="RefSeq" id="NP_001416759.1">
    <property type="nucleotide sequence ID" value="NM_001429830.1"/>
</dbReference>
<dbReference type="RefSeq" id="NP_001416760.1">
    <property type="nucleotide sequence ID" value="NM_001429831.1"/>
</dbReference>
<dbReference type="RefSeq" id="NP_001416761.1">
    <property type="nucleotide sequence ID" value="NM_001429832.1"/>
</dbReference>
<dbReference type="RefSeq" id="XP_006250244.1">
    <property type="nucleotide sequence ID" value="XM_006250182.2"/>
</dbReference>
<dbReference type="RefSeq" id="XP_006250245.1">
    <property type="nucleotide sequence ID" value="XM_006250183.2"/>
</dbReference>
<dbReference type="RefSeq" id="XP_008767887.1">
    <property type="nucleotide sequence ID" value="XM_008769665.2"/>
</dbReference>
<dbReference type="FunCoup" id="Q5PQQ4">
    <property type="interactions" value="3386"/>
</dbReference>
<dbReference type="STRING" id="10116.ENSRNOP00000035922"/>
<dbReference type="PhosphoSitePlus" id="Q5PQQ4"/>
<dbReference type="PaxDb" id="10116-ENSRNOP00000035922"/>
<dbReference type="Ensembl" id="ENSRNOT00000035558.5">
    <property type="protein sequence ID" value="ENSRNOP00000035922.3"/>
    <property type="gene ID" value="ENSRNOG00000026497.5"/>
</dbReference>
<dbReference type="Ensembl" id="ENSRNOT00000076417.2">
    <property type="protein sequence ID" value="ENSRNOP00000068091.2"/>
    <property type="gene ID" value="ENSRNOG00000026497.5"/>
</dbReference>
<dbReference type="Ensembl" id="ENSRNOT00000077069.2">
    <property type="protein sequence ID" value="ENSRNOP00000068000.2"/>
    <property type="gene ID" value="ENSRNOG00000026497.5"/>
</dbReference>
<dbReference type="Ensembl" id="ENSRNOT00000105154.1">
    <property type="protein sequence ID" value="ENSRNOP00000094482.1"/>
    <property type="gene ID" value="ENSRNOG00000026497.5"/>
</dbReference>
<dbReference type="GeneID" id="364032"/>
<dbReference type="KEGG" id="rno:364032"/>
<dbReference type="UCSC" id="RGD:1311337">
    <property type="organism name" value="rat"/>
</dbReference>
<dbReference type="AGR" id="RGD:1311337"/>
<dbReference type="CTD" id="5279"/>
<dbReference type="RGD" id="1311337">
    <property type="gene designation" value="Pigc"/>
</dbReference>
<dbReference type="eggNOG" id="KOG3059">
    <property type="taxonomic scope" value="Eukaryota"/>
</dbReference>
<dbReference type="GeneTree" id="ENSGT00390000005496"/>
<dbReference type="HOGENOM" id="CLU_024002_0_0_1"/>
<dbReference type="InParanoid" id="Q5PQQ4"/>
<dbReference type="OMA" id="STSYHAF"/>
<dbReference type="OrthoDB" id="196709at2759"/>
<dbReference type="PhylomeDB" id="Q5PQQ4"/>
<dbReference type="TreeFam" id="TF314325"/>
<dbReference type="Reactome" id="R-RNO-162710">
    <property type="pathway name" value="Synthesis of glycosylphosphatidylinositol (GPI)"/>
</dbReference>
<dbReference type="UniPathway" id="UPA00196"/>
<dbReference type="PRO" id="PR:Q5PQQ4"/>
<dbReference type="Proteomes" id="UP000002494">
    <property type="component" value="Chromosome 13"/>
</dbReference>
<dbReference type="Bgee" id="ENSRNOG00000026497">
    <property type="expression patterns" value="Expressed in quadriceps femoris and 19 other cell types or tissues"/>
</dbReference>
<dbReference type="ExpressionAtlas" id="Q5PQQ4">
    <property type="expression patterns" value="baseline and differential"/>
</dbReference>
<dbReference type="GO" id="GO:0005789">
    <property type="term" value="C:endoplasmic reticulum membrane"/>
    <property type="evidence" value="ECO:0000266"/>
    <property type="project" value="RGD"/>
</dbReference>
<dbReference type="GO" id="GO:0000506">
    <property type="term" value="C:glycosylphosphatidylinositol-N-acetylglucosaminyltransferase (GPI-GnT) complex"/>
    <property type="evidence" value="ECO:0000250"/>
    <property type="project" value="UniProtKB"/>
</dbReference>
<dbReference type="GO" id="GO:0006506">
    <property type="term" value="P:GPI anchor biosynthetic process"/>
    <property type="evidence" value="ECO:0000250"/>
    <property type="project" value="UniProtKB"/>
</dbReference>
<dbReference type="InterPro" id="IPR009450">
    <property type="entry name" value="Plno_GlcNAc_GPI2"/>
</dbReference>
<dbReference type="PANTHER" id="PTHR12982">
    <property type="entry name" value="PHOSPHATIDYLINOSITOL GLYCAN, CLASS C"/>
    <property type="match status" value="1"/>
</dbReference>
<dbReference type="PANTHER" id="PTHR12982:SF0">
    <property type="entry name" value="PHOSPHATIDYLINOSITOL N-ACETYLGLUCOSAMINYLTRANSFERASE SUBUNIT C"/>
    <property type="match status" value="1"/>
</dbReference>
<dbReference type="Pfam" id="PF06432">
    <property type="entry name" value="GPI2"/>
    <property type="match status" value="1"/>
</dbReference>
<dbReference type="PIRSF" id="PIRSF016104">
    <property type="entry name" value="GPI2"/>
    <property type="match status" value="1"/>
</dbReference>
<name>PIGC_RAT</name>
<feature type="chain" id="PRO_0000058433" description="Phosphatidylinositol N-acetylglucosaminyltransferase subunit C">
    <location>
        <begin position="1"/>
        <end position="297"/>
    </location>
</feature>
<feature type="transmembrane region" description="Helical" evidence="2">
    <location>
        <begin position="67"/>
        <end position="87"/>
    </location>
</feature>
<feature type="transmembrane region" description="Helical" evidence="2">
    <location>
        <begin position="88"/>
        <end position="108"/>
    </location>
</feature>
<feature type="transmembrane region" description="Helical" evidence="2">
    <location>
        <begin position="153"/>
        <end position="173"/>
    </location>
</feature>
<feature type="transmembrane region" description="Helical" evidence="2">
    <location>
        <begin position="239"/>
        <end position="259"/>
    </location>
</feature>
<accession>Q5PQQ4</accession>
<comment type="function">
    <text evidence="1">Part of the glycosylphosphatidylinositol-N-acetylglucosaminyltransferase (GPI-GnT) complex that catalyzes the transfer of N-acetylglucosamine from UDP-N-acetylglucosamine to phosphatidylinositol and participates in the first step of GPI biosynthesis.</text>
</comment>
<comment type="pathway">
    <text evidence="1">Glycolipid biosynthesis; glycosylphosphatidylinositol-anchor biosynthesis.</text>
</comment>
<comment type="subunit">
    <text evidence="1">Component of the glycosylphosphatidylinositol-N-acetylglucosaminyltransferase (GPI-GnT) complex composed at least by PIGA, PIGC, PIGH, PIGP, PIGQ, PIGY and DPM2. Interacts with PIGQ. Interacts with the heterodimer PIGA:PIGH.</text>
</comment>
<comment type="subcellular location">
    <subcellularLocation>
        <location evidence="1">Endoplasmic reticulum membrane</location>
        <topology evidence="1">Multi-pass membrane protein</topology>
    </subcellularLocation>
</comment>
<comment type="similarity">
    <text evidence="3">Belongs to the PIGC family.</text>
</comment>
<gene>
    <name evidence="4" type="primary">Pigc</name>
</gene>
<sequence length="297" mass="33666">MCAQHVADTSEVKWQKVLYERQPFPDNYVDQRFLEELRKNIYARKYQYWAVVFESSVVIQQLCSVCVFVVIWWYMDEGLLAPQWLFGTGLASSLVGYVLFDLIDGGDGRKKSGRTRWADLKSTLVFITFTYGFSPVLKTLTESVSTDTIYAMSVFMLLGHLIFFDYGANAAIVSSTLSLNMAIFASVCLASRLPRSLHAFIMVTFAIQIFALWPMLQKKLKAYTPRSYVGVTLLFAFSAFGGLLSISGVGAILFALLLFSISCLCPYYLIHLQLFKENIHGPWDEAEIKEDLSRFLS</sequence>